<protein>
    <recommendedName>
        <fullName evidence="1">Large ribosomal subunit protein uL22</fullName>
    </recommendedName>
    <alternativeName>
        <fullName evidence="2">50S ribosomal protein L22</fullName>
    </alternativeName>
</protein>
<organism>
    <name type="scientific">Syntrophus aciditrophicus (strain SB)</name>
    <dbReference type="NCBI Taxonomy" id="56780"/>
    <lineage>
        <taxon>Bacteria</taxon>
        <taxon>Pseudomonadati</taxon>
        <taxon>Thermodesulfobacteriota</taxon>
        <taxon>Syntrophia</taxon>
        <taxon>Syntrophales</taxon>
        <taxon>Syntrophaceae</taxon>
        <taxon>Syntrophus</taxon>
    </lineage>
</organism>
<accession>Q2LQ96</accession>
<proteinExistence type="inferred from homology"/>
<sequence length="110" mass="12506">MEAKATAKYIRISPQKARLVVDLIRGKKVDDAREILNYSRKRSGQIVGKVLKSAFANAVQNPNIDEKILFVKEIFVDQGPSMKRWRARAQGRAASIKKRMSHITVILDEK</sequence>
<reference key="1">
    <citation type="journal article" date="2007" name="Proc. Natl. Acad. Sci. U.S.A.">
        <title>The genome of Syntrophus aciditrophicus: life at the thermodynamic limit of microbial growth.</title>
        <authorList>
            <person name="McInerney M.J."/>
            <person name="Rohlin L."/>
            <person name="Mouttaki H."/>
            <person name="Kim U."/>
            <person name="Krupp R.S."/>
            <person name="Rios-Hernandez L."/>
            <person name="Sieber J."/>
            <person name="Struchtemeyer C.G."/>
            <person name="Bhattacharyya A."/>
            <person name="Campbell J.W."/>
            <person name="Gunsalus R.P."/>
        </authorList>
    </citation>
    <scope>NUCLEOTIDE SEQUENCE [LARGE SCALE GENOMIC DNA]</scope>
    <source>
        <strain>SB</strain>
    </source>
</reference>
<comment type="function">
    <text evidence="1">This protein binds specifically to 23S rRNA; its binding is stimulated by other ribosomal proteins, e.g. L4, L17, and L20. It is important during the early stages of 50S assembly. It makes multiple contacts with different domains of the 23S rRNA in the assembled 50S subunit and ribosome (By similarity).</text>
</comment>
<comment type="function">
    <text evidence="1">The globular domain of the protein is located near the polypeptide exit tunnel on the outside of the subunit, while an extended beta-hairpin is found that lines the wall of the exit tunnel in the center of the 70S ribosome.</text>
</comment>
<comment type="subunit">
    <text evidence="1">Part of the 50S ribosomal subunit.</text>
</comment>
<comment type="similarity">
    <text evidence="1">Belongs to the universal ribosomal protein uL22 family.</text>
</comment>
<evidence type="ECO:0000255" key="1">
    <source>
        <dbReference type="HAMAP-Rule" id="MF_01331"/>
    </source>
</evidence>
<evidence type="ECO:0000305" key="2"/>
<keyword id="KW-1185">Reference proteome</keyword>
<keyword id="KW-0687">Ribonucleoprotein</keyword>
<keyword id="KW-0689">Ribosomal protein</keyword>
<keyword id="KW-0694">RNA-binding</keyword>
<keyword id="KW-0699">rRNA-binding</keyword>
<dbReference type="EMBL" id="CP000252">
    <property type="protein sequence ID" value="ABC76185.1"/>
    <property type="molecule type" value="Genomic_DNA"/>
</dbReference>
<dbReference type="RefSeq" id="WP_011416219.1">
    <property type="nucleotide sequence ID" value="NC_007759.1"/>
</dbReference>
<dbReference type="SMR" id="Q2LQ96"/>
<dbReference type="FunCoup" id="Q2LQ96">
    <property type="interactions" value="530"/>
</dbReference>
<dbReference type="STRING" id="56780.SYN_00990"/>
<dbReference type="KEGG" id="sat:SYN_00990"/>
<dbReference type="eggNOG" id="COG0091">
    <property type="taxonomic scope" value="Bacteria"/>
</dbReference>
<dbReference type="HOGENOM" id="CLU_083987_3_3_7"/>
<dbReference type="InParanoid" id="Q2LQ96"/>
<dbReference type="OrthoDB" id="9805969at2"/>
<dbReference type="Proteomes" id="UP000001933">
    <property type="component" value="Chromosome"/>
</dbReference>
<dbReference type="GO" id="GO:0022625">
    <property type="term" value="C:cytosolic large ribosomal subunit"/>
    <property type="evidence" value="ECO:0007669"/>
    <property type="project" value="TreeGrafter"/>
</dbReference>
<dbReference type="GO" id="GO:0019843">
    <property type="term" value="F:rRNA binding"/>
    <property type="evidence" value="ECO:0007669"/>
    <property type="project" value="UniProtKB-UniRule"/>
</dbReference>
<dbReference type="GO" id="GO:0003735">
    <property type="term" value="F:structural constituent of ribosome"/>
    <property type="evidence" value="ECO:0007669"/>
    <property type="project" value="InterPro"/>
</dbReference>
<dbReference type="GO" id="GO:0006412">
    <property type="term" value="P:translation"/>
    <property type="evidence" value="ECO:0007669"/>
    <property type="project" value="UniProtKB-UniRule"/>
</dbReference>
<dbReference type="CDD" id="cd00336">
    <property type="entry name" value="Ribosomal_L22"/>
    <property type="match status" value="1"/>
</dbReference>
<dbReference type="FunFam" id="3.90.470.10:FF:000011">
    <property type="entry name" value="50S ribosomal protein L22"/>
    <property type="match status" value="1"/>
</dbReference>
<dbReference type="Gene3D" id="3.90.470.10">
    <property type="entry name" value="Ribosomal protein L22/L17"/>
    <property type="match status" value="1"/>
</dbReference>
<dbReference type="HAMAP" id="MF_01331_B">
    <property type="entry name" value="Ribosomal_uL22_B"/>
    <property type="match status" value="1"/>
</dbReference>
<dbReference type="InterPro" id="IPR001063">
    <property type="entry name" value="Ribosomal_uL22"/>
</dbReference>
<dbReference type="InterPro" id="IPR005727">
    <property type="entry name" value="Ribosomal_uL22_bac/chlpt-type"/>
</dbReference>
<dbReference type="InterPro" id="IPR047867">
    <property type="entry name" value="Ribosomal_uL22_bac/org-type"/>
</dbReference>
<dbReference type="InterPro" id="IPR018260">
    <property type="entry name" value="Ribosomal_uL22_CS"/>
</dbReference>
<dbReference type="InterPro" id="IPR036394">
    <property type="entry name" value="Ribosomal_uL22_sf"/>
</dbReference>
<dbReference type="NCBIfam" id="TIGR01044">
    <property type="entry name" value="rplV_bact"/>
    <property type="match status" value="1"/>
</dbReference>
<dbReference type="PANTHER" id="PTHR13501">
    <property type="entry name" value="CHLOROPLAST 50S RIBOSOMAL PROTEIN L22-RELATED"/>
    <property type="match status" value="1"/>
</dbReference>
<dbReference type="PANTHER" id="PTHR13501:SF8">
    <property type="entry name" value="LARGE RIBOSOMAL SUBUNIT PROTEIN UL22M"/>
    <property type="match status" value="1"/>
</dbReference>
<dbReference type="Pfam" id="PF00237">
    <property type="entry name" value="Ribosomal_L22"/>
    <property type="match status" value="1"/>
</dbReference>
<dbReference type="SUPFAM" id="SSF54843">
    <property type="entry name" value="Ribosomal protein L22"/>
    <property type="match status" value="1"/>
</dbReference>
<dbReference type="PROSITE" id="PS00464">
    <property type="entry name" value="RIBOSOMAL_L22"/>
    <property type="match status" value="1"/>
</dbReference>
<gene>
    <name evidence="1" type="primary">rplV</name>
    <name type="ordered locus">SYNAS_03060</name>
    <name type="ORF">SYN_00990</name>
</gene>
<name>RL22_SYNAS</name>
<feature type="chain" id="PRO_0000243221" description="Large ribosomal subunit protein uL22">
    <location>
        <begin position="1"/>
        <end position="110"/>
    </location>
</feature>